<organism>
    <name type="scientific">Streptococcus agalactiae serotype V (strain ATCC BAA-611 / 2603 V/R)</name>
    <dbReference type="NCBI Taxonomy" id="208435"/>
    <lineage>
        <taxon>Bacteria</taxon>
        <taxon>Bacillati</taxon>
        <taxon>Bacillota</taxon>
        <taxon>Bacilli</taxon>
        <taxon>Lactobacillales</taxon>
        <taxon>Streptococcaceae</taxon>
        <taxon>Streptococcus</taxon>
    </lineage>
</organism>
<keyword id="KW-1185">Reference proteome</keyword>
<keyword id="KW-0687">Ribonucleoprotein</keyword>
<keyword id="KW-0689">Ribosomal protein</keyword>
<comment type="similarity">
    <text evidence="1">Belongs to the bacterial ribosomal protein bL34 family.</text>
</comment>
<proteinExistence type="inferred from homology"/>
<evidence type="ECO:0000255" key="1">
    <source>
        <dbReference type="HAMAP-Rule" id="MF_00391"/>
    </source>
</evidence>
<evidence type="ECO:0000256" key="2">
    <source>
        <dbReference type="SAM" id="MobiDB-lite"/>
    </source>
</evidence>
<evidence type="ECO:0000305" key="3"/>
<name>RL34_STRA5</name>
<protein>
    <recommendedName>
        <fullName evidence="1">Large ribosomal subunit protein bL34</fullName>
    </recommendedName>
    <alternativeName>
        <fullName evidence="3">50S ribosomal protein L34</fullName>
    </alternativeName>
</protein>
<sequence length="44" mass="5377">MKRTYQPSKIRRQRKHGFRHRMSTKNGRRVLASRRRKGRKVLSA</sequence>
<feature type="chain" id="PRO_0000187469" description="Large ribosomal subunit protein bL34">
    <location>
        <begin position="1"/>
        <end position="44"/>
    </location>
</feature>
<feature type="region of interest" description="Disordered" evidence="2">
    <location>
        <begin position="1"/>
        <end position="44"/>
    </location>
</feature>
<reference key="1">
    <citation type="journal article" date="2002" name="Proc. Natl. Acad. Sci. U.S.A.">
        <title>Complete genome sequence and comparative genomic analysis of an emerging human pathogen, serotype V Streptococcus agalactiae.</title>
        <authorList>
            <person name="Tettelin H."/>
            <person name="Masignani V."/>
            <person name="Cieslewicz M.J."/>
            <person name="Eisen J.A."/>
            <person name="Peterson S.N."/>
            <person name="Wessels M.R."/>
            <person name="Paulsen I.T."/>
            <person name="Nelson K.E."/>
            <person name="Margarit I."/>
            <person name="Read T.D."/>
            <person name="Madoff L.C."/>
            <person name="Wolf A.M."/>
            <person name="Beanan M.J."/>
            <person name="Brinkac L.M."/>
            <person name="Daugherty S.C."/>
            <person name="DeBoy R.T."/>
            <person name="Durkin A.S."/>
            <person name="Kolonay J.F."/>
            <person name="Madupu R."/>
            <person name="Lewis M.R."/>
            <person name="Radune D."/>
            <person name="Fedorova N.B."/>
            <person name="Scanlan D."/>
            <person name="Khouri H.M."/>
            <person name="Mulligan S."/>
            <person name="Carty H.A."/>
            <person name="Cline R.T."/>
            <person name="Van Aken S.E."/>
            <person name="Gill J."/>
            <person name="Scarselli M."/>
            <person name="Mora M."/>
            <person name="Iacobini E.T."/>
            <person name="Brettoni C."/>
            <person name="Galli G."/>
            <person name="Mariani M."/>
            <person name="Vegni F."/>
            <person name="Maione D."/>
            <person name="Rinaudo D."/>
            <person name="Rappuoli R."/>
            <person name="Telford J.L."/>
            <person name="Kasper D.L."/>
            <person name="Grandi G."/>
            <person name="Fraser C.M."/>
        </authorList>
    </citation>
    <scope>NUCLEOTIDE SEQUENCE [LARGE SCALE GENOMIC DNA]</scope>
    <source>
        <strain>ATCC BAA-611 / 2603 V/R</strain>
    </source>
</reference>
<dbReference type="EMBL" id="AE009948">
    <property type="protein sequence ID" value="AAN00656.1"/>
    <property type="molecule type" value="Genomic_DNA"/>
</dbReference>
<dbReference type="RefSeq" id="NP_688783.1">
    <property type="nucleotide sequence ID" value="NC_004116.1"/>
</dbReference>
<dbReference type="RefSeq" id="WP_000831903.1">
    <property type="nucleotide sequence ID" value="NC_004116.1"/>
</dbReference>
<dbReference type="SMR" id="Q8DXQ6"/>
<dbReference type="STRING" id="208435.SAG1793"/>
<dbReference type="GeneID" id="98394107"/>
<dbReference type="KEGG" id="sag:SAG1793"/>
<dbReference type="PATRIC" id="fig|208435.3.peg.1801"/>
<dbReference type="HOGENOM" id="CLU_129938_2_0_9"/>
<dbReference type="OrthoDB" id="9804164at2"/>
<dbReference type="PRO" id="PR:Q8DXQ6"/>
<dbReference type="Proteomes" id="UP000000821">
    <property type="component" value="Chromosome"/>
</dbReference>
<dbReference type="GO" id="GO:1990904">
    <property type="term" value="C:ribonucleoprotein complex"/>
    <property type="evidence" value="ECO:0007669"/>
    <property type="project" value="UniProtKB-KW"/>
</dbReference>
<dbReference type="GO" id="GO:0005840">
    <property type="term" value="C:ribosome"/>
    <property type="evidence" value="ECO:0007669"/>
    <property type="project" value="UniProtKB-KW"/>
</dbReference>
<dbReference type="GO" id="GO:0003735">
    <property type="term" value="F:structural constituent of ribosome"/>
    <property type="evidence" value="ECO:0007669"/>
    <property type="project" value="InterPro"/>
</dbReference>
<dbReference type="GO" id="GO:0006412">
    <property type="term" value="P:translation"/>
    <property type="evidence" value="ECO:0007669"/>
    <property type="project" value="UniProtKB-UniRule"/>
</dbReference>
<dbReference type="FunFam" id="1.10.287.3980:FF:000001">
    <property type="entry name" value="Mitochondrial ribosomal protein L34"/>
    <property type="match status" value="1"/>
</dbReference>
<dbReference type="Gene3D" id="1.10.287.3980">
    <property type="match status" value="1"/>
</dbReference>
<dbReference type="HAMAP" id="MF_00391">
    <property type="entry name" value="Ribosomal_bL34"/>
    <property type="match status" value="1"/>
</dbReference>
<dbReference type="InterPro" id="IPR000271">
    <property type="entry name" value="Ribosomal_bL34"/>
</dbReference>
<dbReference type="InterPro" id="IPR020939">
    <property type="entry name" value="Ribosomal_bL34_CS"/>
</dbReference>
<dbReference type="NCBIfam" id="TIGR01030">
    <property type="entry name" value="rpmH_bact"/>
    <property type="match status" value="1"/>
</dbReference>
<dbReference type="PANTHER" id="PTHR14503:SF4">
    <property type="entry name" value="LARGE RIBOSOMAL SUBUNIT PROTEIN BL34M"/>
    <property type="match status" value="1"/>
</dbReference>
<dbReference type="PANTHER" id="PTHR14503">
    <property type="entry name" value="MITOCHONDRIAL RIBOSOMAL PROTEIN 34 FAMILY MEMBER"/>
    <property type="match status" value="1"/>
</dbReference>
<dbReference type="Pfam" id="PF00468">
    <property type="entry name" value="Ribosomal_L34"/>
    <property type="match status" value="1"/>
</dbReference>
<dbReference type="PROSITE" id="PS00784">
    <property type="entry name" value="RIBOSOMAL_L34"/>
    <property type="match status" value="1"/>
</dbReference>
<accession>Q8DXQ6</accession>
<gene>
    <name evidence="1" type="primary">rpmH</name>
    <name type="ordered locus">SAG1793</name>
</gene>